<comment type="cofactor">
    <cofactor evidence="1">
        <name>a divalent metal cation</name>
        <dbReference type="ChEBI" id="CHEBI:60240"/>
    </cofactor>
</comment>
<comment type="subcellular location">
    <subcellularLocation>
        <location evidence="1">Periplasm</location>
    </subcellularLocation>
</comment>
<comment type="similarity">
    <text evidence="3">Belongs to the 5'-nucleotidase family.</text>
</comment>
<organism>
    <name type="scientific">Salmonella typhimurium (strain LT2 / SGSC1412 / ATCC 700720)</name>
    <dbReference type="NCBI Taxonomy" id="99287"/>
    <lineage>
        <taxon>Bacteria</taxon>
        <taxon>Pseudomonadati</taxon>
        <taxon>Pseudomonadota</taxon>
        <taxon>Gammaproteobacteria</taxon>
        <taxon>Enterobacterales</taxon>
        <taxon>Enterobacteriaceae</taxon>
        <taxon>Salmonella</taxon>
    </lineage>
</organism>
<name>USHA_SALTY</name>
<gene>
    <name type="primary">ushA</name>
    <name type="ordered locus">STM0494</name>
</gene>
<reference key="1">
    <citation type="journal article" date="1986" name="J. Mol. Biol.">
        <title>Identification and sequence analysis of a silent gene (ushA0) in Salmonella typhimurium.</title>
        <authorList>
            <person name="Burns D.M."/>
            <person name="Beacham I.R."/>
        </authorList>
    </citation>
    <scope>NUCLEOTIDE SEQUENCE [GENOMIC DNA]</scope>
</reference>
<reference key="2">
    <citation type="journal article" date="2001" name="Microbiology">
        <title>The cryptic ushA gene (ushA(c)) in natural isolates of Salmonella enterica (serotype Typhimurium) has been inactivated by a single missense mutation.</title>
        <authorList>
            <person name="Innes D."/>
            <person name="Beacham I.R."/>
            <person name="Beven C.-A."/>
            <person name="Douglas M."/>
            <person name="Laird M.W."/>
            <person name="Joly J.C."/>
            <person name="Burns D.M."/>
        </authorList>
    </citation>
    <scope>NUCLEOTIDE SEQUENCE [GENOMIC DNA]</scope>
    <source>
        <strain>CDC 1119-83</strain>
        <strain>CDC 137-85</strain>
        <strain>CDC 179-87</strain>
        <strain>CDC 331-86</strain>
        <strain>CDC 655-84</strain>
    </source>
</reference>
<reference key="3">
    <citation type="journal article" date="2001" name="Nature">
        <title>Complete genome sequence of Salmonella enterica serovar Typhimurium LT2.</title>
        <authorList>
            <person name="McClelland M."/>
            <person name="Sanderson K.E."/>
            <person name="Spieth J."/>
            <person name="Clifton S.W."/>
            <person name="Latreille P."/>
            <person name="Courtney L."/>
            <person name="Porwollik S."/>
            <person name="Ali J."/>
            <person name="Dante M."/>
            <person name="Du F."/>
            <person name="Hou S."/>
            <person name="Layman D."/>
            <person name="Leonard S."/>
            <person name="Nguyen C."/>
            <person name="Scott K."/>
            <person name="Holmes A."/>
            <person name="Grewal N."/>
            <person name="Mulvaney E."/>
            <person name="Ryan E."/>
            <person name="Sun H."/>
            <person name="Florea L."/>
            <person name="Miller W."/>
            <person name="Stoneking T."/>
            <person name="Nhan M."/>
            <person name="Waterston R."/>
            <person name="Wilson R.K."/>
        </authorList>
    </citation>
    <scope>NUCLEOTIDE SEQUENCE [LARGE SCALE GENOMIC DNA]</scope>
    <source>
        <strain>LT2 / SGSC1412 / ATCC 700720</strain>
    </source>
</reference>
<sequence length="550" mass="60557">MKFLKRGVALALLAAFALTTQPAQAYEKDKTYKITILHTNDHHGHFWRSEYGEYGLAAQKTLVDSIRKEVAQEGGSVLLLSGGDINTGVPESDLQDAEPDFRGMNLIGYDAMAVGNHEFDNPLTVLRQQEKWAKFPFLYANIYQKSTGERLFKPWAIFTRQDIKIAVIGLTTDDTAKIGNPEYFTDIEFRKPAEEAKVVIQELNMNEKPDVIIATTHMGHYDNGDHGSNAPGDVEMARSLPAGSLAMIVGGHSQDPVCMASENKKQVNYVPGTPCAPDKQNGIWIVQAHEWGKYVGRADFEFRNGEMKMVNYQLIPVNLKKKVTWDNGKSERVLYTPEIAENPQMLSLLTPFQNKGKAQLEVKIGSVNGLLEGDRSKVRFVQTNMGRVILAAQIARTGADFGVMSGGGIRDSIEAGDITYKSVLKVQPFGNIVVYADMSGKEVVDYLTAVAQMKPDSGAYPQLANVSFVAKEGKLTDLKIKGEPVDPAKTYRMATLSFNATGGDGYPRIDNKPGYVNTGFIDAEVLKEFIQQNSPLDAAAFTPNGEVSWL</sequence>
<keyword id="KW-1015">Disulfide bond</keyword>
<keyword id="KW-0479">Metal-binding</keyword>
<keyword id="KW-0547">Nucleotide-binding</keyword>
<keyword id="KW-0574">Periplasm</keyword>
<keyword id="KW-1185">Reference proteome</keyword>
<keyword id="KW-0732">Signal</keyword>
<proteinExistence type="inferred from homology"/>
<protein>
    <recommendedName>
        <fullName>Silent protein UshA(0)</fullName>
    </recommendedName>
</protein>
<accession>P06196</accession>
<accession>Q9R369</accession>
<accession>Q9RN34</accession>
<accession>Q9RN35</accession>
<accession>Q9RN36</accession>
<feature type="signal peptide" evidence="2">
    <location>
        <begin position="1"/>
        <end position="25"/>
    </location>
</feature>
<feature type="chain" id="PRO_0000000033" description="Silent protein UshA(0)">
    <location>
        <begin position="26"/>
        <end position="550"/>
    </location>
</feature>
<feature type="binding site" evidence="1">
    <location>
        <position position="41"/>
    </location>
    <ligand>
        <name>a divalent metal cation</name>
        <dbReference type="ChEBI" id="CHEBI:60240"/>
        <label>1</label>
    </ligand>
</feature>
<feature type="binding site" evidence="1">
    <location>
        <position position="43"/>
    </location>
    <ligand>
        <name>a divalent metal cation</name>
        <dbReference type="ChEBI" id="CHEBI:60240"/>
        <label>1</label>
    </ligand>
</feature>
<feature type="binding site" evidence="1">
    <location>
        <position position="84"/>
    </location>
    <ligand>
        <name>a divalent metal cation</name>
        <dbReference type="ChEBI" id="CHEBI:60240"/>
        <label>1</label>
    </ligand>
</feature>
<feature type="binding site" evidence="1">
    <location>
        <position position="84"/>
    </location>
    <ligand>
        <name>a divalent metal cation</name>
        <dbReference type="ChEBI" id="CHEBI:60240"/>
        <label>2</label>
    </ligand>
</feature>
<feature type="binding site" evidence="1">
    <location>
        <position position="116"/>
    </location>
    <ligand>
        <name>a divalent metal cation</name>
        <dbReference type="ChEBI" id="CHEBI:60240"/>
        <label>2</label>
    </ligand>
</feature>
<feature type="binding site" evidence="1">
    <location>
        <position position="217"/>
    </location>
    <ligand>
        <name>a divalent metal cation</name>
        <dbReference type="ChEBI" id="CHEBI:60240"/>
        <label>2</label>
    </ligand>
</feature>
<feature type="binding site" evidence="1">
    <location>
        <position position="252"/>
    </location>
    <ligand>
        <name>a divalent metal cation</name>
        <dbReference type="ChEBI" id="CHEBI:60240"/>
        <label>2</label>
    </ligand>
</feature>
<feature type="binding site" evidence="1">
    <location>
        <position position="254"/>
    </location>
    <ligand>
        <name>a divalent metal cation</name>
        <dbReference type="ChEBI" id="CHEBI:60240"/>
        <label>1</label>
    </ligand>
</feature>
<feature type="binding site" evidence="1">
    <location>
        <position position="429"/>
    </location>
    <ligand>
        <name>substrate</name>
    </ligand>
</feature>
<feature type="binding site" evidence="1">
    <location>
        <begin position="498"/>
        <end position="504"/>
    </location>
    <ligand>
        <name>substrate</name>
    </ligand>
</feature>
<feature type="site" description="Transition state stabilizer" evidence="1">
    <location>
        <position position="117"/>
    </location>
</feature>
<feature type="site" description="Transition state stabilizer" evidence="1">
    <location>
        <position position="120"/>
    </location>
</feature>
<feature type="disulfide bond" evidence="1">
    <location>
        <begin position="258"/>
        <end position="275"/>
    </location>
</feature>
<feature type="sequence variant" description="In strain: CDC 137-85 and CDC 179-87.">
    <original>Y</original>
    <variation>S</variation>
    <location>
        <position position="139"/>
    </location>
</feature>
<feature type="sequence variant" description="In strain: CDC 137-85.">
    <original>K</original>
    <variation>N</variation>
    <location>
        <position position="197"/>
    </location>
</feature>
<feature type="sequence variant" description="In strain: CDC 179-87.">
    <original>V</original>
    <variation>G</variation>
    <location>
        <position position="388"/>
    </location>
</feature>
<feature type="sequence variant" description="In strain: CDC 179-87.">
    <original>Q</original>
    <variation>H</variation>
    <location>
        <position position="393"/>
    </location>
</feature>
<feature type="sequence variant" description="In strain: CDC 179-87.">
    <original>E</original>
    <variation>D</variation>
    <location>
        <position position="414"/>
    </location>
</feature>
<feature type="sequence variant" description="In strain: CDC 179-87, CDC 331-86 and CDC 655-84.">
    <original>A</original>
    <variation>R</variation>
    <location>
        <position position="449"/>
    </location>
</feature>
<feature type="sequence variant" description="In strain: CDC 137-85.">
    <original>L</original>
    <variation>F</variation>
    <location>
        <position position="463"/>
    </location>
</feature>
<feature type="sequence variant" description="In strain: CDC 137-85.">
    <original>A</original>
    <variation>T</variation>
    <location>
        <position position="538"/>
    </location>
</feature>
<feature type="sequence variant" description="In strain: CDC 137-85.">
    <original>N</original>
    <variation>K</variation>
    <location>
        <position position="544"/>
    </location>
</feature>
<feature type="sequence conflict" description="In Ref. 1; CAA28348." evidence="3" ref="1">
    <original>R</original>
    <variation>G</variation>
    <location>
        <position position="396"/>
    </location>
</feature>
<dbReference type="EMBL" id="X04651">
    <property type="protein sequence ID" value="CAA28348.1"/>
    <property type="molecule type" value="Genomic_DNA"/>
</dbReference>
<dbReference type="EMBL" id="AF188728">
    <property type="protein sequence ID" value="AAF05582.1"/>
    <property type="molecule type" value="Genomic_DNA"/>
</dbReference>
<dbReference type="EMBL" id="AF188729">
    <property type="protein sequence ID" value="AAF05583.1"/>
    <property type="molecule type" value="Genomic_DNA"/>
</dbReference>
<dbReference type="EMBL" id="AF188730">
    <property type="protein sequence ID" value="AAF05584.1"/>
    <property type="molecule type" value="Genomic_DNA"/>
</dbReference>
<dbReference type="EMBL" id="AF188731">
    <property type="protein sequence ID" value="AAF05585.1"/>
    <property type="molecule type" value="Genomic_DNA"/>
</dbReference>
<dbReference type="EMBL" id="AF188732">
    <property type="protein sequence ID" value="AAF05586.1"/>
    <property type="molecule type" value="Genomic_DNA"/>
</dbReference>
<dbReference type="EMBL" id="AE006468">
    <property type="protein sequence ID" value="AAL19448.1"/>
    <property type="molecule type" value="Genomic_DNA"/>
</dbReference>
<dbReference type="PIR" id="A26076">
    <property type="entry name" value="A26076"/>
</dbReference>
<dbReference type="RefSeq" id="NP_459489.1">
    <property type="nucleotide sequence ID" value="NC_003197.2"/>
</dbReference>
<dbReference type="RefSeq" id="WP_000670407.1">
    <property type="nucleotide sequence ID" value="NC_003197.2"/>
</dbReference>
<dbReference type="SMR" id="P06196"/>
<dbReference type="STRING" id="99287.STM0494"/>
<dbReference type="PaxDb" id="99287-STM0494"/>
<dbReference type="GeneID" id="1252014"/>
<dbReference type="KEGG" id="stm:STM0494"/>
<dbReference type="PATRIC" id="fig|99287.12.peg.528"/>
<dbReference type="HOGENOM" id="CLU_005854_7_0_6"/>
<dbReference type="PhylomeDB" id="P06196"/>
<dbReference type="BioCyc" id="SENT99287:STM0494-MONOMER"/>
<dbReference type="Proteomes" id="UP000001014">
    <property type="component" value="Chromosome"/>
</dbReference>
<dbReference type="GO" id="GO:0030288">
    <property type="term" value="C:outer membrane-bounded periplasmic space"/>
    <property type="evidence" value="ECO:0000318"/>
    <property type="project" value="GO_Central"/>
</dbReference>
<dbReference type="GO" id="GO:0008253">
    <property type="term" value="F:5'-nucleotidase activity"/>
    <property type="evidence" value="ECO:0000318"/>
    <property type="project" value="GO_Central"/>
</dbReference>
<dbReference type="GO" id="GO:0046872">
    <property type="term" value="F:metal ion binding"/>
    <property type="evidence" value="ECO:0007669"/>
    <property type="project" value="UniProtKB-KW"/>
</dbReference>
<dbReference type="GO" id="GO:0000166">
    <property type="term" value="F:nucleotide binding"/>
    <property type="evidence" value="ECO:0007669"/>
    <property type="project" value="UniProtKB-KW"/>
</dbReference>
<dbReference type="GO" id="GO:0008768">
    <property type="term" value="F:UDP-sugar diphosphatase activity"/>
    <property type="evidence" value="ECO:0000318"/>
    <property type="project" value="GO_Central"/>
</dbReference>
<dbReference type="GO" id="GO:0009166">
    <property type="term" value="P:nucleotide catabolic process"/>
    <property type="evidence" value="ECO:0007669"/>
    <property type="project" value="InterPro"/>
</dbReference>
<dbReference type="CDD" id="cd07405">
    <property type="entry name" value="MPP_UshA_N"/>
    <property type="match status" value="1"/>
</dbReference>
<dbReference type="FunFam" id="3.60.21.10:FF:000025">
    <property type="entry name" value="Protein UshA"/>
    <property type="match status" value="1"/>
</dbReference>
<dbReference type="FunFam" id="3.90.780.10:FF:000003">
    <property type="entry name" value="Protein UshA"/>
    <property type="match status" value="1"/>
</dbReference>
<dbReference type="Gene3D" id="3.60.21.10">
    <property type="match status" value="1"/>
</dbReference>
<dbReference type="Gene3D" id="3.90.780.10">
    <property type="entry name" value="5'-Nucleotidase, C-terminal domain"/>
    <property type="match status" value="1"/>
</dbReference>
<dbReference type="InterPro" id="IPR008334">
    <property type="entry name" value="5'-Nucleotdase_C"/>
</dbReference>
<dbReference type="InterPro" id="IPR036907">
    <property type="entry name" value="5'-Nucleotdase_C_sf"/>
</dbReference>
<dbReference type="InterPro" id="IPR006146">
    <property type="entry name" value="5'-Nucleotdase_CS"/>
</dbReference>
<dbReference type="InterPro" id="IPR006179">
    <property type="entry name" value="5_nucleotidase/apyrase"/>
</dbReference>
<dbReference type="InterPro" id="IPR004843">
    <property type="entry name" value="Calcineurin-like_PHP_ApaH"/>
</dbReference>
<dbReference type="InterPro" id="IPR029052">
    <property type="entry name" value="Metallo-depent_PP-like"/>
</dbReference>
<dbReference type="NCBIfam" id="NF007109">
    <property type="entry name" value="PRK09558.1"/>
    <property type="match status" value="1"/>
</dbReference>
<dbReference type="PANTHER" id="PTHR11575">
    <property type="entry name" value="5'-NUCLEOTIDASE-RELATED"/>
    <property type="match status" value="1"/>
</dbReference>
<dbReference type="PANTHER" id="PTHR11575:SF46">
    <property type="entry name" value="PROTEIN USHA"/>
    <property type="match status" value="1"/>
</dbReference>
<dbReference type="Pfam" id="PF02872">
    <property type="entry name" value="5_nucleotid_C"/>
    <property type="match status" value="1"/>
</dbReference>
<dbReference type="Pfam" id="PF00149">
    <property type="entry name" value="Metallophos"/>
    <property type="match status" value="1"/>
</dbReference>
<dbReference type="PRINTS" id="PR01607">
    <property type="entry name" value="APYRASEFAMLY"/>
</dbReference>
<dbReference type="SUPFAM" id="SSF55816">
    <property type="entry name" value="5'-nucleotidase (syn. UDP-sugar hydrolase), C-terminal domain"/>
    <property type="match status" value="1"/>
</dbReference>
<dbReference type="SUPFAM" id="SSF56300">
    <property type="entry name" value="Metallo-dependent phosphatases"/>
    <property type="match status" value="1"/>
</dbReference>
<dbReference type="PROSITE" id="PS00785">
    <property type="entry name" value="5_NUCLEOTIDASE_1"/>
    <property type="match status" value="1"/>
</dbReference>
<dbReference type="PROSITE" id="PS00786">
    <property type="entry name" value="5_NUCLEOTIDASE_2"/>
    <property type="match status" value="1"/>
</dbReference>
<evidence type="ECO:0000250" key="1"/>
<evidence type="ECO:0000255" key="2"/>
<evidence type="ECO:0000305" key="3"/>